<sequence length="743" mass="87376">MGLLTFRDVAVEFSLEEWEHLEPAQKNLYQDVMLENYRNLVSLGLVVSKPDLITFLEQRKEPWNVKSEETVAIQPDVFSHYNKDLLTEHCTEASFQKVISRRHGSCDLENLHLRKRWKREECEGHNGCYDEKTFKYDQFDESSVESLFHQQILSSCAKSYNFDQYRKVFTHSSLLNQQEEIDIWGKHHIYDKTSVLFRQVSTLNSYRNVFIGEKNYHCNNSEKTLNQSSSPKNHQENYFLEKQYKCKEFEEVFLQSMHGQEKQEQSYKCNKCVEVCTQSLKHIQHQTIHIRENSYSYNKYDKDLSQSSNLRKQIIHNEEKPYKCEKCGDSLNHSLHLTQHQIIPTEEKPCKWKECGKVFNLNCSLYLTKQQQIDTGENLYKCKACSKSFTRSSNLIVHQRIHTGEKPYKCKECGKAFRCSSYLTKHKRIHTGEKPYKCKECGKAFNRSSCLTQHQTTHTGEKLYKCKVCSKSYARSSNLIMHQRVHTGEKPYKCKECGKVFSRSSCLTQHRKIHTGENLYKCKVCAKPFTCFSNLIVHERIHTGEKPYKCKECGKAFPYSSHLIRHHRIHTGEKPYKCKACSKSFSDSSGLTVHRRTHTGEKPYTCKECGKAFSYSSDVIQHRRIHTGQRPYKCEECGKAFNYRSYLTTHQRSHTGERPYKCEECGKAFNSRSYLTTHRRRHTGERPYKCDECGKAFSYRSYLTTHRRSHSGERPYKCEECGKAFNSRSYLIAHQRSHTREKL</sequence>
<organism>
    <name type="scientific">Homo sapiens</name>
    <name type="common">Human</name>
    <dbReference type="NCBI Taxonomy" id="9606"/>
    <lineage>
        <taxon>Eukaryota</taxon>
        <taxon>Metazoa</taxon>
        <taxon>Chordata</taxon>
        <taxon>Craniata</taxon>
        <taxon>Vertebrata</taxon>
        <taxon>Euteleostomi</taxon>
        <taxon>Mammalia</taxon>
        <taxon>Eutheria</taxon>
        <taxon>Euarchontoglires</taxon>
        <taxon>Primates</taxon>
        <taxon>Haplorrhini</taxon>
        <taxon>Catarrhini</taxon>
        <taxon>Hominidae</taxon>
        <taxon>Homo</taxon>
    </lineage>
</organism>
<reference key="1">
    <citation type="submission" date="2000-01" db="EMBL/GenBank/DDBJ databases">
        <title>Identification of a nitric oxide regulated krueppel-like zinc finger protein using motif directed differential display.</title>
        <authorList>
            <person name="Schaefer U."/>
            <person name="Schneider A."/>
            <person name="Neugebauer E."/>
        </authorList>
    </citation>
    <scope>NUCLEOTIDE SEQUENCE [MRNA]</scope>
    <scope>VARIANT TYR-350</scope>
</reference>
<reference key="2">
    <citation type="journal article" date="2004" name="Nat. Genet.">
        <title>Complete sequencing and characterization of 21,243 full-length human cDNAs.</title>
        <authorList>
            <person name="Ota T."/>
            <person name="Suzuki Y."/>
            <person name="Nishikawa T."/>
            <person name="Otsuki T."/>
            <person name="Sugiyama T."/>
            <person name="Irie R."/>
            <person name="Wakamatsu A."/>
            <person name="Hayashi K."/>
            <person name="Sato H."/>
            <person name="Nagai K."/>
            <person name="Kimura K."/>
            <person name="Makita H."/>
            <person name="Sekine M."/>
            <person name="Obayashi M."/>
            <person name="Nishi T."/>
            <person name="Shibahara T."/>
            <person name="Tanaka T."/>
            <person name="Ishii S."/>
            <person name="Yamamoto J."/>
            <person name="Saito K."/>
            <person name="Kawai Y."/>
            <person name="Isono Y."/>
            <person name="Nakamura Y."/>
            <person name="Nagahari K."/>
            <person name="Murakami K."/>
            <person name="Yasuda T."/>
            <person name="Iwayanagi T."/>
            <person name="Wagatsuma M."/>
            <person name="Shiratori A."/>
            <person name="Sudo H."/>
            <person name="Hosoiri T."/>
            <person name="Kaku Y."/>
            <person name="Kodaira H."/>
            <person name="Kondo H."/>
            <person name="Sugawara M."/>
            <person name="Takahashi M."/>
            <person name="Kanda K."/>
            <person name="Yokoi T."/>
            <person name="Furuya T."/>
            <person name="Kikkawa E."/>
            <person name="Omura Y."/>
            <person name="Abe K."/>
            <person name="Kamihara K."/>
            <person name="Katsuta N."/>
            <person name="Sato K."/>
            <person name="Tanikawa M."/>
            <person name="Yamazaki M."/>
            <person name="Ninomiya K."/>
            <person name="Ishibashi T."/>
            <person name="Yamashita H."/>
            <person name="Murakawa K."/>
            <person name="Fujimori K."/>
            <person name="Tanai H."/>
            <person name="Kimata M."/>
            <person name="Watanabe M."/>
            <person name="Hiraoka S."/>
            <person name="Chiba Y."/>
            <person name="Ishida S."/>
            <person name="Ono Y."/>
            <person name="Takiguchi S."/>
            <person name="Watanabe S."/>
            <person name="Yosida M."/>
            <person name="Hotuta T."/>
            <person name="Kusano J."/>
            <person name="Kanehori K."/>
            <person name="Takahashi-Fujii A."/>
            <person name="Hara H."/>
            <person name="Tanase T.-O."/>
            <person name="Nomura Y."/>
            <person name="Togiya S."/>
            <person name="Komai F."/>
            <person name="Hara R."/>
            <person name="Takeuchi K."/>
            <person name="Arita M."/>
            <person name="Imose N."/>
            <person name="Musashino K."/>
            <person name="Yuuki H."/>
            <person name="Oshima A."/>
            <person name="Sasaki N."/>
            <person name="Aotsuka S."/>
            <person name="Yoshikawa Y."/>
            <person name="Matsunawa H."/>
            <person name="Ichihara T."/>
            <person name="Shiohata N."/>
            <person name="Sano S."/>
            <person name="Moriya S."/>
            <person name="Momiyama H."/>
            <person name="Satoh N."/>
            <person name="Takami S."/>
            <person name="Terashima Y."/>
            <person name="Suzuki O."/>
            <person name="Nakagawa S."/>
            <person name="Senoh A."/>
            <person name="Mizoguchi H."/>
            <person name="Goto Y."/>
            <person name="Shimizu F."/>
            <person name="Wakebe H."/>
            <person name="Hishigaki H."/>
            <person name="Watanabe T."/>
            <person name="Sugiyama A."/>
            <person name="Takemoto M."/>
            <person name="Kawakami B."/>
            <person name="Yamazaki M."/>
            <person name="Watanabe K."/>
            <person name="Kumagai A."/>
            <person name="Itakura S."/>
            <person name="Fukuzumi Y."/>
            <person name="Fujimori Y."/>
            <person name="Komiyama M."/>
            <person name="Tashiro H."/>
            <person name="Tanigami A."/>
            <person name="Fujiwara T."/>
            <person name="Ono T."/>
            <person name="Yamada K."/>
            <person name="Fujii Y."/>
            <person name="Ozaki K."/>
            <person name="Hirao M."/>
            <person name="Ohmori Y."/>
            <person name="Kawabata A."/>
            <person name="Hikiji T."/>
            <person name="Kobatake N."/>
            <person name="Inagaki H."/>
            <person name="Ikema Y."/>
            <person name="Okamoto S."/>
            <person name="Okitani R."/>
            <person name="Kawakami T."/>
            <person name="Noguchi S."/>
            <person name="Itoh T."/>
            <person name="Shigeta K."/>
            <person name="Senba T."/>
            <person name="Matsumura K."/>
            <person name="Nakajima Y."/>
            <person name="Mizuno T."/>
            <person name="Morinaga M."/>
            <person name="Sasaki M."/>
            <person name="Togashi T."/>
            <person name="Oyama M."/>
            <person name="Hata H."/>
            <person name="Watanabe M."/>
            <person name="Komatsu T."/>
            <person name="Mizushima-Sugano J."/>
            <person name="Satoh T."/>
            <person name="Shirai Y."/>
            <person name="Takahashi Y."/>
            <person name="Nakagawa K."/>
            <person name="Okumura K."/>
            <person name="Nagase T."/>
            <person name="Nomura N."/>
            <person name="Kikuchi H."/>
            <person name="Masuho Y."/>
            <person name="Yamashita R."/>
            <person name="Nakai K."/>
            <person name="Yada T."/>
            <person name="Nakamura Y."/>
            <person name="Ohara O."/>
            <person name="Isogai T."/>
            <person name="Sugano S."/>
        </authorList>
    </citation>
    <scope>NUCLEOTIDE SEQUENCE [LARGE SCALE MRNA]</scope>
    <scope>VARIANT TYR-350</scope>
    <source>
        <tissue>Testis</tissue>
    </source>
</reference>
<reference key="3">
    <citation type="journal article" date="2004" name="Genome Res.">
        <title>The status, quality, and expansion of the NIH full-length cDNA project: the Mammalian Gene Collection (MGC).</title>
        <authorList>
            <consortium name="The MGC Project Team"/>
        </authorList>
    </citation>
    <scope>NUCLEOTIDE SEQUENCE [LARGE SCALE MRNA]</scope>
    <scope>VARIANT TYR-350</scope>
    <source>
        <tissue>Testis</tissue>
    </source>
</reference>
<reference key="4">
    <citation type="journal article" date="1995" name="DNA Cell Biol.">
        <title>Isolation of cDNA clones for 42 different Kruppel-related zinc finger proteins expressed in the human monoblast cell line U-937.</title>
        <authorList>
            <person name="Abrink M."/>
            <person name="Aveskogh M."/>
            <person name="Hellman L."/>
        </authorList>
    </citation>
    <scope>NUCLEOTIDE SEQUENCE [MRNA] OF 12-743</scope>
    <scope>VARIANT TYR-350</scope>
</reference>
<reference key="5">
    <citation type="journal article" date="2015" name="Cell Rep.">
        <title>SUMO-2 orchestrates chromatin modifiers in response to DNA damage.</title>
        <authorList>
            <person name="Hendriks I.A."/>
            <person name="Treffers L.W."/>
            <person name="Verlaan-de Vries M."/>
            <person name="Olsen J.V."/>
            <person name="Vertegaal A.C."/>
        </authorList>
    </citation>
    <scope>SUMOYLATION [LARGE SCALE ANALYSIS] AT LYS-66</scope>
    <scope>IDENTIFICATION BY MASS SPECTROMETRY [LARGE SCALE ANALYSIS]</scope>
</reference>
<reference key="6">
    <citation type="journal article" date="2017" name="Nat. Struct. Mol. Biol.">
        <title>Site-specific mapping of the human SUMO proteome reveals co-modification with phosphorylation.</title>
        <authorList>
            <person name="Hendriks I.A."/>
            <person name="Lyon D."/>
            <person name="Young C."/>
            <person name="Jensen L.J."/>
            <person name="Vertegaal A.C."/>
            <person name="Nielsen M.L."/>
        </authorList>
    </citation>
    <scope>SUMOYLATION [LARGE SCALE ANALYSIS] AT LYS-66 AND LYS-135</scope>
    <scope>IDENTIFICATION BY MASS SPECTROMETRY [LARGE SCALE ANALYSIS]</scope>
</reference>
<feature type="chain" id="PRO_0000047494" description="Zinc finger protein 267">
    <location>
        <begin position="1"/>
        <end position="743"/>
    </location>
</feature>
<feature type="domain" description="KRAB" evidence="2">
    <location>
        <begin position="4"/>
        <end position="75"/>
    </location>
</feature>
<feature type="zinc finger region" description="C2H2-type 1" evidence="1">
    <location>
        <begin position="267"/>
        <end position="289"/>
    </location>
</feature>
<feature type="zinc finger region" description="C2H2-type 2; atypical" evidence="1">
    <location>
        <begin position="322"/>
        <end position="340"/>
    </location>
</feature>
<feature type="zinc finger region" description="C2H2-type 3" evidence="1">
    <location>
        <begin position="380"/>
        <end position="402"/>
    </location>
</feature>
<feature type="zinc finger region" description="C2H2-type 4" evidence="1">
    <location>
        <begin position="408"/>
        <end position="430"/>
    </location>
</feature>
<feature type="zinc finger region" description="C2H2-type 5" evidence="1">
    <location>
        <begin position="436"/>
        <end position="458"/>
    </location>
</feature>
<feature type="zinc finger region" description="C2H2-type 6" evidence="1">
    <location>
        <begin position="464"/>
        <end position="486"/>
    </location>
</feature>
<feature type="zinc finger region" description="C2H2-type 7" evidence="1">
    <location>
        <begin position="492"/>
        <end position="514"/>
    </location>
</feature>
<feature type="zinc finger region" description="C2H2-type 8" evidence="1">
    <location>
        <begin position="520"/>
        <end position="542"/>
    </location>
</feature>
<feature type="zinc finger region" description="C2H2-type 9" evidence="1">
    <location>
        <begin position="548"/>
        <end position="570"/>
    </location>
</feature>
<feature type="zinc finger region" description="C2H2-type 10" evidence="1">
    <location>
        <begin position="576"/>
        <end position="598"/>
    </location>
</feature>
<feature type="zinc finger region" description="C2H2-type 11" evidence="1">
    <location>
        <begin position="604"/>
        <end position="626"/>
    </location>
</feature>
<feature type="zinc finger region" description="C2H2-type 12" evidence="1">
    <location>
        <begin position="632"/>
        <end position="654"/>
    </location>
</feature>
<feature type="zinc finger region" description="C2H2-type 13" evidence="1">
    <location>
        <begin position="660"/>
        <end position="682"/>
    </location>
</feature>
<feature type="zinc finger region" description="C2H2-type 14" evidence="1">
    <location>
        <begin position="688"/>
        <end position="710"/>
    </location>
</feature>
<feature type="zinc finger region" description="C2H2-type 15" evidence="1">
    <location>
        <begin position="716"/>
        <end position="738"/>
    </location>
</feature>
<feature type="cross-link" description="Glycyl lysine isopeptide (Lys-Gly) (interchain with G-Cter in SUMO2)" evidence="8 9">
    <location>
        <position position="66"/>
    </location>
</feature>
<feature type="cross-link" description="Glycyl lysine isopeptide (Lys-Gly) (interchain with G-Cter in SUMO2)" evidence="9">
    <location>
        <position position="135"/>
    </location>
</feature>
<feature type="sequence variant" id="VAR_057414" description="In dbSNP:rs7202455.">
    <original>M</original>
    <variation>V</variation>
    <location>
        <position position="257"/>
    </location>
</feature>
<feature type="sequence variant" id="VAR_059907" description="In dbSNP:rs3850114." evidence="3 4 5 6">
    <original>C</original>
    <variation>Y</variation>
    <location>
        <position position="350"/>
    </location>
</feature>
<feature type="sequence conflict" description="In Ref. 3; AAH36367." evidence="7" ref="3">
    <original>D</original>
    <variation>N</variation>
    <location>
        <position position="31"/>
    </location>
</feature>
<feature type="sequence conflict" description="In Ref. 1; AAF73867 and 4; CAA55525." evidence="7" ref="1 4">
    <original>H</original>
    <variation>Y</variation>
    <location>
        <position position="567"/>
    </location>
</feature>
<feature type="sequence conflict" description="In Ref. 1; AAF73867 and 4; CAA55525." evidence="7" ref="1 4">
    <original>T</original>
    <variation>S</variation>
    <location>
        <position position="592"/>
    </location>
</feature>
<comment type="function">
    <text>May be involved in transcriptional regulation.</text>
</comment>
<comment type="subcellular location">
    <subcellularLocation>
        <location evidence="7">Nucleus</location>
    </subcellularLocation>
</comment>
<comment type="similarity">
    <text evidence="7">Belongs to the krueppel C2H2-type zinc-finger protein family.</text>
</comment>
<evidence type="ECO:0000255" key="1">
    <source>
        <dbReference type="PROSITE-ProRule" id="PRU00042"/>
    </source>
</evidence>
<evidence type="ECO:0000255" key="2">
    <source>
        <dbReference type="PROSITE-ProRule" id="PRU00119"/>
    </source>
</evidence>
<evidence type="ECO:0000269" key="3">
    <source>
    </source>
</evidence>
<evidence type="ECO:0000269" key="4">
    <source>
    </source>
</evidence>
<evidence type="ECO:0000269" key="5">
    <source>
    </source>
</evidence>
<evidence type="ECO:0000269" key="6">
    <source ref="1"/>
</evidence>
<evidence type="ECO:0000305" key="7"/>
<evidence type="ECO:0007744" key="8">
    <source>
    </source>
</evidence>
<evidence type="ECO:0007744" key="9">
    <source>
    </source>
</evidence>
<proteinExistence type="evidence at protein level"/>
<protein>
    <recommendedName>
        <fullName>Zinc finger protein 267</fullName>
    </recommendedName>
    <alternativeName>
        <fullName>Zinc finger protein HZF2</fullName>
    </alternativeName>
</protein>
<name>ZN267_HUMAN</name>
<gene>
    <name type="primary">ZNF267</name>
</gene>
<accession>Q14586</accession>
<accession>A0JNZ9</accession>
<accession>Q8NE41</accession>
<accession>Q9NRJ0</accession>
<dbReference type="EMBL" id="AF220492">
    <property type="protein sequence ID" value="AAF73867.1"/>
    <property type="molecule type" value="mRNA"/>
</dbReference>
<dbReference type="EMBL" id="AK292573">
    <property type="protein sequence ID" value="BAF85262.1"/>
    <property type="molecule type" value="mRNA"/>
</dbReference>
<dbReference type="EMBL" id="BC036367">
    <property type="protein sequence ID" value="AAH36367.1"/>
    <property type="molecule type" value="mRNA"/>
</dbReference>
<dbReference type="EMBL" id="BC127088">
    <property type="protein sequence ID" value="AAI27089.1"/>
    <property type="molecule type" value="mRNA"/>
</dbReference>
<dbReference type="EMBL" id="BC127089">
    <property type="protein sequence ID" value="AAI27090.1"/>
    <property type="molecule type" value="mRNA"/>
</dbReference>
<dbReference type="EMBL" id="X78925">
    <property type="protein sequence ID" value="CAA55525.1"/>
    <property type="molecule type" value="mRNA"/>
</dbReference>
<dbReference type="CCDS" id="CCDS32440.1"/>
<dbReference type="PIR" id="S47073">
    <property type="entry name" value="S47073"/>
</dbReference>
<dbReference type="RefSeq" id="NP_001252517.1">
    <property type="nucleotide sequence ID" value="NM_001265588.1"/>
</dbReference>
<dbReference type="RefSeq" id="NP_003405.3">
    <property type="nucleotide sequence ID" value="NM_003414.5"/>
</dbReference>
<dbReference type="SMR" id="Q14586"/>
<dbReference type="BioGRID" id="115594">
    <property type="interactions" value="13"/>
</dbReference>
<dbReference type="FunCoup" id="Q14586">
    <property type="interactions" value="84"/>
</dbReference>
<dbReference type="IntAct" id="Q14586">
    <property type="interactions" value="25"/>
</dbReference>
<dbReference type="STRING" id="9606.ENSP00000300870"/>
<dbReference type="iPTMnet" id="Q14586"/>
<dbReference type="PhosphoSitePlus" id="Q14586"/>
<dbReference type="BioMuta" id="ZNF267"/>
<dbReference type="DMDM" id="296453069"/>
<dbReference type="jPOST" id="Q14586"/>
<dbReference type="MassIVE" id="Q14586"/>
<dbReference type="PaxDb" id="9606-ENSP00000300870"/>
<dbReference type="PeptideAtlas" id="Q14586"/>
<dbReference type="ProteomicsDB" id="60059"/>
<dbReference type="Antibodypedia" id="833">
    <property type="antibodies" value="26 antibodies from 11 providers"/>
</dbReference>
<dbReference type="DNASU" id="10308"/>
<dbReference type="Ensembl" id="ENST00000300870.15">
    <property type="protein sequence ID" value="ENSP00000300870.10"/>
    <property type="gene ID" value="ENSG00000185947.15"/>
</dbReference>
<dbReference type="GeneID" id="10308"/>
<dbReference type="KEGG" id="hsa:10308"/>
<dbReference type="MANE-Select" id="ENST00000300870.15">
    <property type="protein sequence ID" value="ENSP00000300870.10"/>
    <property type="RefSeq nucleotide sequence ID" value="NM_003414.6"/>
    <property type="RefSeq protein sequence ID" value="NP_003405.4"/>
</dbReference>
<dbReference type="UCSC" id="uc002ecs.6">
    <property type="organism name" value="human"/>
</dbReference>
<dbReference type="AGR" id="HGNC:13060"/>
<dbReference type="CTD" id="10308"/>
<dbReference type="DisGeNET" id="10308"/>
<dbReference type="GeneCards" id="ZNF267"/>
<dbReference type="HGNC" id="HGNC:13060">
    <property type="gene designation" value="ZNF267"/>
</dbReference>
<dbReference type="HPA" id="ENSG00000185947">
    <property type="expression patterns" value="Low tissue specificity"/>
</dbReference>
<dbReference type="MIM" id="604752">
    <property type="type" value="gene"/>
</dbReference>
<dbReference type="neXtProt" id="NX_Q14586"/>
<dbReference type="OpenTargets" id="ENSG00000185947"/>
<dbReference type="PharmGKB" id="PA37638"/>
<dbReference type="VEuPathDB" id="HostDB:ENSG00000185947"/>
<dbReference type="eggNOG" id="KOG1721">
    <property type="taxonomic scope" value="Eukaryota"/>
</dbReference>
<dbReference type="GeneTree" id="ENSGT00940000164593"/>
<dbReference type="HOGENOM" id="CLU_002678_0_12_1"/>
<dbReference type="InParanoid" id="Q14586"/>
<dbReference type="OMA" id="CEGHSGC"/>
<dbReference type="OrthoDB" id="9516351at2759"/>
<dbReference type="PAN-GO" id="Q14586">
    <property type="GO annotations" value="4 GO annotations based on evolutionary models"/>
</dbReference>
<dbReference type="PhylomeDB" id="Q14586"/>
<dbReference type="TreeFam" id="TF341817"/>
<dbReference type="PathwayCommons" id="Q14586"/>
<dbReference type="Reactome" id="R-HSA-212436">
    <property type="pathway name" value="Generic Transcription Pathway"/>
</dbReference>
<dbReference type="SignaLink" id="Q14586"/>
<dbReference type="SIGNOR" id="Q14586"/>
<dbReference type="BioGRID-ORCS" id="10308">
    <property type="hits" value="27 hits in 1174 CRISPR screens"/>
</dbReference>
<dbReference type="GeneWiki" id="ZNF267"/>
<dbReference type="GenomeRNAi" id="10308"/>
<dbReference type="Pharos" id="Q14586">
    <property type="development level" value="Tbio"/>
</dbReference>
<dbReference type="PRO" id="PR:Q14586"/>
<dbReference type="Proteomes" id="UP000005640">
    <property type="component" value="Chromosome 16"/>
</dbReference>
<dbReference type="RNAct" id="Q14586">
    <property type="molecule type" value="protein"/>
</dbReference>
<dbReference type="Bgee" id="ENSG00000185947">
    <property type="expression patterns" value="Expressed in oocyte and 195 other cell types or tissues"/>
</dbReference>
<dbReference type="ExpressionAtlas" id="Q14586">
    <property type="expression patterns" value="baseline and differential"/>
</dbReference>
<dbReference type="GO" id="GO:0005634">
    <property type="term" value="C:nucleus"/>
    <property type="evidence" value="ECO:0000318"/>
    <property type="project" value="GO_Central"/>
</dbReference>
<dbReference type="GO" id="GO:0003677">
    <property type="term" value="F:DNA binding"/>
    <property type="evidence" value="ECO:0007669"/>
    <property type="project" value="UniProtKB-KW"/>
</dbReference>
<dbReference type="GO" id="GO:0008270">
    <property type="term" value="F:zinc ion binding"/>
    <property type="evidence" value="ECO:0007669"/>
    <property type="project" value="UniProtKB-KW"/>
</dbReference>
<dbReference type="GO" id="GO:0006357">
    <property type="term" value="P:regulation of transcription by RNA polymerase II"/>
    <property type="evidence" value="ECO:0000318"/>
    <property type="project" value="GO_Central"/>
</dbReference>
<dbReference type="CDD" id="cd07765">
    <property type="entry name" value="KRAB_A-box"/>
    <property type="match status" value="1"/>
</dbReference>
<dbReference type="FunFam" id="3.30.160.60:FF:000478">
    <property type="entry name" value="Zinc finger protein 133"/>
    <property type="match status" value="1"/>
</dbReference>
<dbReference type="FunFam" id="3.30.160.60:FF:001158">
    <property type="entry name" value="zinc finger protein 22"/>
    <property type="match status" value="1"/>
</dbReference>
<dbReference type="FunFam" id="3.30.160.60:FF:002343">
    <property type="entry name" value="Zinc finger protein 33A"/>
    <property type="match status" value="2"/>
</dbReference>
<dbReference type="FunFam" id="3.30.160.60:FF:000016">
    <property type="entry name" value="zinc finger protein 37 homolog"/>
    <property type="match status" value="3"/>
</dbReference>
<dbReference type="FunFam" id="3.30.160.60:FF:002004">
    <property type="entry name" value="Zinc finger protein 473"/>
    <property type="match status" value="1"/>
</dbReference>
<dbReference type="FunFam" id="3.30.160.60:FF:000384">
    <property type="entry name" value="Zinc finger protein 550"/>
    <property type="match status" value="1"/>
</dbReference>
<dbReference type="FunFam" id="3.30.160.60:FF:000367">
    <property type="entry name" value="Zinc finger protein 572"/>
    <property type="match status" value="2"/>
</dbReference>
<dbReference type="FunFam" id="3.30.160.60:FF:001270">
    <property type="entry name" value="zinc finger protein 583 isoform X1"/>
    <property type="match status" value="1"/>
</dbReference>
<dbReference type="FunFam" id="3.30.160.60:FF:002134">
    <property type="entry name" value="Zinc finger protein 616"/>
    <property type="match status" value="1"/>
</dbReference>
<dbReference type="FunFam" id="3.30.160.60:FF:000307">
    <property type="entry name" value="Zinc finger protein ZFP69 isoform 1"/>
    <property type="match status" value="1"/>
</dbReference>
<dbReference type="Gene3D" id="6.10.140.140">
    <property type="match status" value="1"/>
</dbReference>
<dbReference type="Gene3D" id="3.30.160.60">
    <property type="entry name" value="Classic Zinc Finger"/>
    <property type="match status" value="16"/>
</dbReference>
<dbReference type="InterPro" id="IPR001909">
    <property type="entry name" value="KRAB"/>
</dbReference>
<dbReference type="InterPro" id="IPR036051">
    <property type="entry name" value="KRAB_dom_sf"/>
</dbReference>
<dbReference type="InterPro" id="IPR036236">
    <property type="entry name" value="Znf_C2H2_sf"/>
</dbReference>
<dbReference type="InterPro" id="IPR013087">
    <property type="entry name" value="Znf_C2H2_type"/>
</dbReference>
<dbReference type="PANTHER" id="PTHR24379">
    <property type="entry name" value="KRAB AND ZINC FINGER DOMAIN-CONTAINING"/>
    <property type="match status" value="1"/>
</dbReference>
<dbReference type="PANTHER" id="PTHR24379:SF131">
    <property type="entry name" value="ZINC FINGER PROTEIN 737-LIKE-RELATED"/>
    <property type="match status" value="1"/>
</dbReference>
<dbReference type="Pfam" id="PF01352">
    <property type="entry name" value="KRAB"/>
    <property type="match status" value="1"/>
</dbReference>
<dbReference type="Pfam" id="PF00096">
    <property type="entry name" value="zf-C2H2"/>
    <property type="match status" value="12"/>
</dbReference>
<dbReference type="SMART" id="SM00349">
    <property type="entry name" value="KRAB"/>
    <property type="match status" value="1"/>
</dbReference>
<dbReference type="SMART" id="SM00355">
    <property type="entry name" value="ZnF_C2H2"/>
    <property type="match status" value="15"/>
</dbReference>
<dbReference type="SUPFAM" id="SSF57667">
    <property type="entry name" value="beta-beta-alpha zinc fingers"/>
    <property type="match status" value="10"/>
</dbReference>
<dbReference type="SUPFAM" id="SSF109640">
    <property type="entry name" value="KRAB domain (Kruppel-associated box)"/>
    <property type="match status" value="1"/>
</dbReference>
<dbReference type="PROSITE" id="PS50805">
    <property type="entry name" value="KRAB"/>
    <property type="match status" value="1"/>
</dbReference>
<dbReference type="PROSITE" id="PS00028">
    <property type="entry name" value="ZINC_FINGER_C2H2_1"/>
    <property type="match status" value="14"/>
</dbReference>
<dbReference type="PROSITE" id="PS50157">
    <property type="entry name" value="ZINC_FINGER_C2H2_2"/>
    <property type="match status" value="14"/>
</dbReference>
<keyword id="KW-0238">DNA-binding</keyword>
<keyword id="KW-1017">Isopeptide bond</keyword>
<keyword id="KW-0479">Metal-binding</keyword>
<keyword id="KW-0539">Nucleus</keyword>
<keyword id="KW-1267">Proteomics identification</keyword>
<keyword id="KW-1185">Reference proteome</keyword>
<keyword id="KW-0677">Repeat</keyword>
<keyword id="KW-0804">Transcription</keyword>
<keyword id="KW-0805">Transcription regulation</keyword>
<keyword id="KW-0832">Ubl conjugation</keyword>
<keyword id="KW-0862">Zinc</keyword>
<keyword id="KW-0863">Zinc-finger</keyword>